<reference key="1">
    <citation type="journal article" date="2009" name="BMC Genomics">
        <title>Evidence for niche adaptation in the genome of the bovine pathogen Streptococcus uberis.</title>
        <authorList>
            <person name="Ward P.N."/>
            <person name="Holden M.T.G."/>
            <person name="Leigh J.A."/>
            <person name="Lennard N."/>
            <person name="Bignell A."/>
            <person name="Barron A."/>
            <person name="Clark L."/>
            <person name="Quail M.A."/>
            <person name="Woodward J."/>
            <person name="Barrell B.G."/>
            <person name="Egan S.A."/>
            <person name="Field T.R."/>
            <person name="Maskell D."/>
            <person name="Kehoe M."/>
            <person name="Dowson C.G."/>
            <person name="Chanter N."/>
            <person name="Whatmore A.M."/>
            <person name="Bentley S.D."/>
            <person name="Parkhill J."/>
        </authorList>
    </citation>
    <scope>NUCLEOTIDE SEQUENCE [LARGE SCALE GENOMIC DNA]</scope>
    <source>
        <strain>ATCC BAA-854 / 0140J</strain>
    </source>
</reference>
<accession>B9DW68</accession>
<dbReference type="EMBL" id="AM946015">
    <property type="protein sequence ID" value="CAR43773.1"/>
    <property type="molecule type" value="Genomic_DNA"/>
</dbReference>
<dbReference type="RefSeq" id="WP_015912071.1">
    <property type="nucleotide sequence ID" value="NC_012004.1"/>
</dbReference>
<dbReference type="SMR" id="B9DW68"/>
<dbReference type="STRING" id="218495.SUB1781"/>
<dbReference type="KEGG" id="sub:SUB1781"/>
<dbReference type="eggNOG" id="COG0632">
    <property type="taxonomic scope" value="Bacteria"/>
</dbReference>
<dbReference type="HOGENOM" id="CLU_087936_1_0_9"/>
<dbReference type="OrthoDB" id="5293449at2"/>
<dbReference type="Proteomes" id="UP000000449">
    <property type="component" value="Chromosome"/>
</dbReference>
<dbReference type="GO" id="GO:0005737">
    <property type="term" value="C:cytoplasm"/>
    <property type="evidence" value="ECO:0007669"/>
    <property type="project" value="UniProtKB-SubCell"/>
</dbReference>
<dbReference type="GO" id="GO:0009379">
    <property type="term" value="C:Holliday junction helicase complex"/>
    <property type="evidence" value="ECO:0007669"/>
    <property type="project" value="InterPro"/>
</dbReference>
<dbReference type="GO" id="GO:0048476">
    <property type="term" value="C:Holliday junction resolvase complex"/>
    <property type="evidence" value="ECO:0007669"/>
    <property type="project" value="UniProtKB-UniRule"/>
</dbReference>
<dbReference type="GO" id="GO:0005524">
    <property type="term" value="F:ATP binding"/>
    <property type="evidence" value="ECO:0007669"/>
    <property type="project" value="InterPro"/>
</dbReference>
<dbReference type="GO" id="GO:0000400">
    <property type="term" value="F:four-way junction DNA binding"/>
    <property type="evidence" value="ECO:0007669"/>
    <property type="project" value="UniProtKB-UniRule"/>
</dbReference>
<dbReference type="GO" id="GO:0009378">
    <property type="term" value="F:four-way junction helicase activity"/>
    <property type="evidence" value="ECO:0007669"/>
    <property type="project" value="InterPro"/>
</dbReference>
<dbReference type="GO" id="GO:0006310">
    <property type="term" value="P:DNA recombination"/>
    <property type="evidence" value="ECO:0007669"/>
    <property type="project" value="UniProtKB-UniRule"/>
</dbReference>
<dbReference type="GO" id="GO:0006281">
    <property type="term" value="P:DNA repair"/>
    <property type="evidence" value="ECO:0007669"/>
    <property type="project" value="UniProtKB-UniRule"/>
</dbReference>
<dbReference type="CDD" id="cd14332">
    <property type="entry name" value="UBA_RuvA_C"/>
    <property type="match status" value="1"/>
</dbReference>
<dbReference type="Gene3D" id="1.10.150.20">
    <property type="entry name" value="5' to 3' exonuclease, C-terminal subdomain"/>
    <property type="match status" value="1"/>
</dbReference>
<dbReference type="Gene3D" id="1.10.8.10">
    <property type="entry name" value="DNA helicase RuvA subunit, C-terminal domain"/>
    <property type="match status" value="1"/>
</dbReference>
<dbReference type="Gene3D" id="2.40.50.140">
    <property type="entry name" value="Nucleic acid-binding proteins"/>
    <property type="match status" value="1"/>
</dbReference>
<dbReference type="HAMAP" id="MF_00031">
    <property type="entry name" value="DNA_HJ_migration_RuvA"/>
    <property type="match status" value="1"/>
</dbReference>
<dbReference type="InterPro" id="IPR013849">
    <property type="entry name" value="DNA_helicase_Holl-junc_RuvA_I"/>
</dbReference>
<dbReference type="InterPro" id="IPR003583">
    <property type="entry name" value="Hlx-hairpin-Hlx_DNA-bd_motif"/>
</dbReference>
<dbReference type="InterPro" id="IPR012340">
    <property type="entry name" value="NA-bd_OB-fold"/>
</dbReference>
<dbReference type="InterPro" id="IPR000085">
    <property type="entry name" value="RuvA"/>
</dbReference>
<dbReference type="InterPro" id="IPR010994">
    <property type="entry name" value="RuvA_2-like"/>
</dbReference>
<dbReference type="InterPro" id="IPR011114">
    <property type="entry name" value="RuvA_C"/>
</dbReference>
<dbReference type="InterPro" id="IPR036267">
    <property type="entry name" value="RuvA_C_sf"/>
</dbReference>
<dbReference type="NCBIfam" id="TIGR00084">
    <property type="entry name" value="ruvA"/>
    <property type="match status" value="1"/>
</dbReference>
<dbReference type="Pfam" id="PF14520">
    <property type="entry name" value="HHH_5"/>
    <property type="match status" value="1"/>
</dbReference>
<dbReference type="Pfam" id="PF07499">
    <property type="entry name" value="RuvA_C"/>
    <property type="match status" value="1"/>
</dbReference>
<dbReference type="Pfam" id="PF01330">
    <property type="entry name" value="RuvA_N"/>
    <property type="match status" value="1"/>
</dbReference>
<dbReference type="SMART" id="SM00278">
    <property type="entry name" value="HhH1"/>
    <property type="match status" value="2"/>
</dbReference>
<dbReference type="SUPFAM" id="SSF46929">
    <property type="entry name" value="DNA helicase RuvA subunit, C-terminal domain"/>
    <property type="match status" value="1"/>
</dbReference>
<dbReference type="SUPFAM" id="SSF50249">
    <property type="entry name" value="Nucleic acid-binding proteins"/>
    <property type="match status" value="1"/>
</dbReference>
<dbReference type="SUPFAM" id="SSF47781">
    <property type="entry name" value="RuvA domain 2-like"/>
    <property type="match status" value="1"/>
</dbReference>
<protein>
    <recommendedName>
        <fullName evidence="1">Holliday junction branch migration complex subunit RuvA</fullName>
    </recommendedName>
</protein>
<organism>
    <name type="scientific">Streptococcus uberis (strain ATCC BAA-854 / 0140J)</name>
    <dbReference type="NCBI Taxonomy" id="218495"/>
    <lineage>
        <taxon>Bacteria</taxon>
        <taxon>Bacillati</taxon>
        <taxon>Bacillota</taxon>
        <taxon>Bacilli</taxon>
        <taxon>Lactobacillales</taxon>
        <taxon>Streptococcaceae</taxon>
        <taxon>Streptococcus</taxon>
    </lineage>
</organism>
<comment type="function">
    <text evidence="1">The RuvA-RuvB-RuvC complex processes Holliday junction (HJ) DNA during genetic recombination and DNA repair, while the RuvA-RuvB complex plays an important role in the rescue of blocked DNA replication forks via replication fork reversal (RFR). RuvA specifically binds to HJ cruciform DNA, conferring on it an open structure. The RuvB hexamer acts as an ATP-dependent pump, pulling dsDNA into and through the RuvAB complex. HJ branch migration allows RuvC to scan DNA until it finds its consensus sequence, where it cleaves and resolves the cruciform DNA.</text>
</comment>
<comment type="subunit">
    <text evidence="1">Homotetramer. Forms an RuvA(8)-RuvB(12)-Holliday junction (HJ) complex. HJ DNA is sandwiched between 2 RuvA tetramers; dsDNA enters through RuvA and exits via RuvB. An RuvB hexamer assembles on each DNA strand where it exits the tetramer. Each RuvB hexamer is contacted by two RuvA subunits (via domain III) on 2 adjacent RuvB subunits; this complex drives branch migration. In the full resolvosome a probable DNA-RuvA(4)-RuvB(12)-RuvC(2) complex forms which resolves the HJ.</text>
</comment>
<comment type="subcellular location">
    <subcellularLocation>
        <location evidence="1">Cytoplasm</location>
    </subcellularLocation>
</comment>
<comment type="domain">
    <text evidence="1">Has three domains with a flexible linker between the domains II and III and assumes an 'L' shape. Domain III is highly mobile and contacts RuvB.</text>
</comment>
<comment type="similarity">
    <text evidence="1">Belongs to the RuvA family.</text>
</comment>
<evidence type="ECO:0000255" key="1">
    <source>
        <dbReference type="HAMAP-Rule" id="MF_00031"/>
    </source>
</evidence>
<feature type="chain" id="PRO_1000116982" description="Holliday junction branch migration complex subunit RuvA">
    <location>
        <begin position="1"/>
        <end position="197"/>
    </location>
</feature>
<feature type="region of interest" description="Domain I" evidence="1">
    <location>
        <begin position="1"/>
        <end position="63"/>
    </location>
</feature>
<feature type="region of interest" description="Domain II" evidence="1">
    <location>
        <begin position="64"/>
        <end position="142"/>
    </location>
</feature>
<feature type="region of interest" description="Flexible linker" evidence="1">
    <location>
        <begin position="142"/>
        <end position="146"/>
    </location>
</feature>
<feature type="region of interest" description="Domain III" evidence="1">
    <location>
        <begin position="147"/>
        <end position="197"/>
    </location>
</feature>
<gene>
    <name evidence="1" type="primary">ruvA</name>
    <name type="ordered locus">SUB1781</name>
</gene>
<keyword id="KW-0963">Cytoplasm</keyword>
<keyword id="KW-0227">DNA damage</keyword>
<keyword id="KW-0233">DNA recombination</keyword>
<keyword id="KW-0234">DNA repair</keyword>
<keyword id="KW-0238">DNA-binding</keyword>
<keyword id="KW-1185">Reference proteome</keyword>
<sequence>MFDYIKGQLTKITAKYIVVEANGLGYIIYVANPYSFSDSVNQTLTIYLHQVIREDAHLLFGFHTENEKDVFLKLISVSGIGPMTALAIVAVDDNEGLVAAIDNSDIKYLMKFPKIGKKTAQQMILDLSGKFVTIPEGGQAQQMPKAKGNQQLDEAIEALLALGYKATELKKIRAFFEGTDDTAEQYIKSALKMLMKG</sequence>
<proteinExistence type="inferred from homology"/>
<name>RUVA_STRU0</name>